<organism>
    <name type="scientific">Pasteurella multocida (strain Pm70)</name>
    <dbReference type="NCBI Taxonomy" id="272843"/>
    <lineage>
        <taxon>Bacteria</taxon>
        <taxon>Pseudomonadati</taxon>
        <taxon>Pseudomonadota</taxon>
        <taxon>Gammaproteobacteria</taxon>
        <taxon>Pasteurellales</taxon>
        <taxon>Pasteurellaceae</taxon>
        <taxon>Pasteurella</taxon>
    </lineage>
</organism>
<name>RIMO_PASMU</name>
<accession>Q9CKN9</accession>
<keyword id="KW-0004">4Fe-4S</keyword>
<keyword id="KW-0963">Cytoplasm</keyword>
<keyword id="KW-0408">Iron</keyword>
<keyword id="KW-0411">Iron-sulfur</keyword>
<keyword id="KW-0479">Metal-binding</keyword>
<keyword id="KW-1185">Reference proteome</keyword>
<keyword id="KW-0949">S-adenosyl-L-methionine</keyword>
<keyword id="KW-0808">Transferase</keyword>
<gene>
    <name evidence="1" type="primary">rimO</name>
    <name type="ordered locus">PM1571</name>
</gene>
<comment type="function">
    <text evidence="1">Catalyzes the methylthiolation of an aspartic acid residue of ribosomal protein uS12.</text>
</comment>
<comment type="catalytic activity">
    <reaction evidence="1">
        <text>L-aspartate(89)-[ribosomal protein uS12]-hydrogen + (sulfur carrier)-SH + AH2 + 2 S-adenosyl-L-methionine = 3-methylsulfanyl-L-aspartate(89)-[ribosomal protein uS12]-hydrogen + (sulfur carrier)-H + 5'-deoxyadenosine + L-methionine + A + S-adenosyl-L-homocysteine + 2 H(+)</text>
        <dbReference type="Rhea" id="RHEA:37087"/>
        <dbReference type="Rhea" id="RHEA-COMP:10460"/>
        <dbReference type="Rhea" id="RHEA-COMP:10461"/>
        <dbReference type="Rhea" id="RHEA-COMP:14737"/>
        <dbReference type="Rhea" id="RHEA-COMP:14739"/>
        <dbReference type="ChEBI" id="CHEBI:13193"/>
        <dbReference type="ChEBI" id="CHEBI:15378"/>
        <dbReference type="ChEBI" id="CHEBI:17319"/>
        <dbReference type="ChEBI" id="CHEBI:17499"/>
        <dbReference type="ChEBI" id="CHEBI:29917"/>
        <dbReference type="ChEBI" id="CHEBI:29961"/>
        <dbReference type="ChEBI" id="CHEBI:57844"/>
        <dbReference type="ChEBI" id="CHEBI:57856"/>
        <dbReference type="ChEBI" id="CHEBI:59789"/>
        <dbReference type="ChEBI" id="CHEBI:64428"/>
        <dbReference type="ChEBI" id="CHEBI:73599"/>
        <dbReference type="EC" id="2.8.4.4"/>
    </reaction>
</comment>
<comment type="cofactor">
    <cofactor evidence="1">
        <name>[4Fe-4S] cluster</name>
        <dbReference type="ChEBI" id="CHEBI:49883"/>
    </cofactor>
    <text evidence="1">Binds 2 [4Fe-4S] clusters. One cluster is coordinated with 3 cysteines and an exchangeable S-adenosyl-L-methionine.</text>
</comment>
<comment type="subcellular location">
    <subcellularLocation>
        <location evidence="1">Cytoplasm</location>
    </subcellularLocation>
</comment>
<comment type="similarity">
    <text evidence="1">Belongs to the methylthiotransferase family. RimO subfamily.</text>
</comment>
<sequence length="446" mass="50071">MTSSLPNIGFISLGCPKNLVDSERILTELRSDGYNIIPSYENADLVIVNTCGFIDSAVQESLEAIGEALEENGKVIVTGCLGAKEDRIREVHPKVLEVTGPHSYEAVMQQVHKYVPKPAYNPYVNLVPKQGVKLTPKHYAYLKISEGCDHRCTFCIIPSMRGDLDSRSITQVLDEAKRLVEAGVKEILVVSQDTSAYALDRSKEEQNKTVFWNGMPIKNNLISLCEQLGKLGVWVRLHYVYPYPHVDQLIPLMAEGKILPYLDIPLQHASPKILKAMKRPGSIERTLERIKKWREICPDLTLRSTFIVGFPGESEEDFQLLLDFLKEALLDRVGCFKFSPVEGAIATEMPDQVPEEVKEARFHRFMQLQQEISAARLQQKVGKVFTVLVDEVDEEGIIARSIADAPEIDGVVYIDNPNRVAVKAGQFIEVKITRADAYDLYASLIN</sequence>
<feature type="chain" id="PRO_0000141748" description="Ribosomal protein uS12 methylthiotransferase RimO">
    <location>
        <begin position="1"/>
        <end position="446"/>
    </location>
</feature>
<feature type="domain" description="MTTase N-terminal" evidence="1">
    <location>
        <begin position="6"/>
        <end position="116"/>
    </location>
</feature>
<feature type="domain" description="Radical SAM core" evidence="2">
    <location>
        <begin position="134"/>
        <end position="375"/>
    </location>
</feature>
<feature type="domain" description="TRAM" evidence="1">
    <location>
        <begin position="378"/>
        <end position="446"/>
    </location>
</feature>
<feature type="binding site" evidence="1">
    <location>
        <position position="15"/>
    </location>
    <ligand>
        <name>[4Fe-4S] cluster</name>
        <dbReference type="ChEBI" id="CHEBI:49883"/>
        <label>1</label>
    </ligand>
</feature>
<feature type="binding site" evidence="1">
    <location>
        <position position="51"/>
    </location>
    <ligand>
        <name>[4Fe-4S] cluster</name>
        <dbReference type="ChEBI" id="CHEBI:49883"/>
        <label>1</label>
    </ligand>
</feature>
<feature type="binding site" evidence="1">
    <location>
        <position position="80"/>
    </location>
    <ligand>
        <name>[4Fe-4S] cluster</name>
        <dbReference type="ChEBI" id="CHEBI:49883"/>
        <label>1</label>
    </ligand>
</feature>
<feature type="binding site" evidence="1">
    <location>
        <position position="148"/>
    </location>
    <ligand>
        <name>[4Fe-4S] cluster</name>
        <dbReference type="ChEBI" id="CHEBI:49883"/>
        <label>2</label>
        <note>4Fe-4S-S-AdoMet</note>
    </ligand>
</feature>
<feature type="binding site" evidence="1">
    <location>
        <position position="152"/>
    </location>
    <ligand>
        <name>[4Fe-4S] cluster</name>
        <dbReference type="ChEBI" id="CHEBI:49883"/>
        <label>2</label>
        <note>4Fe-4S-S-AdoMet</note>
    </ligand>
</feature>
<feature type="binding site" evidence="1">
    <location>
        <position position="155"/>
    </location>
    <ligand>
        <name>[4Fe-4S] cluster</name>
        <dbReference type="ChEBI" id="CHEBI:49883"/>
        <label>2</label>
        <note>4Fe-4S-S-AdoMet</note>
    </ligand>
</feature>
<protein>
    <recommendedName>
        <fullName evidence="1">Ribosomal protein uS12 methylthiotransferase RimO</fullName>
        <shortName evidence="1">uS12 MTTase</shortName>
        <shortName evidence="1">uS12 methylthiotransferase</shortName>
        <ecNumber evidence="1">2.8.4.4</ecNumber>
    </recommendedName>
    <alternativeName>
        <fullName evidence="1">Ribosomal protein uS12 (aspartate-C(3))-methylthiotransferase</fullName>
    </alternativeName>
    <alternativeName>
        <fullName evidence="1">Ribosome maturation factor RimO</fullName>
    </alternativeName>
</protein>
<dbReference type="EC" id="2.8.4.4" evidence="1"/>
<dbReference type="EMBL" id="AE004439">
    <property type="protein sequence ID" value="AAK03655.1"/>
    <property type="molecule type" value="Genomic_DNA"/>
</dbReference>
<dbReference type="RefSeq" id="WP_010907234.1">
    <property type="nucleotide sequence ID" value="NC_002663.1"/>
</dbReference>
<dbReference type="SMR" id="Q9CKN9"/>
<dbReference type="STRING" id="272843.PM1571"/>
<dbReference type="EnsemblBacteria" id="AAK03655">
    <property type="protein sequence ID" value="AAK03655"/>
    <property type="gene ID" value="PM1571"/>
</dbReference>
<dbReference type="KEGG" id="pmu:PM1571"/>
<dbReference type="PATRIC" id="fig|272843.6.peg.1588"/>
<dbReference type="HOGENOM" id="CLU_018697_0_0_6"/>
<dbReference type="OrthoDB" id="9805215at2"/>
<dbReference type="Proteomes" id="UP000000809">
    <property type="component" value="Chromosome"/>
</dbReference>
<dbReference type="GO" id="GO:0005829">
    <property type="term" value="C:cytosol"/>
    <property type="evidence" value="ECO:0007669"/>
    <property type="project" value="TreeGrafter"/>
</dbReference>
<dbReference type="GO" id="GO:0051539">
    <property type="term" value="F:4 iron, 4 sulfur cluster binding"/>
    <property type="evidence" value="ECO:0007669"/>
    <property type="project" value="UniProtKB-UniRule"/>
</dbReference>
<dbReference type="GO" id="GO:0035599">
    <property type="term" value="F:aspartic acid methylthiotransferase activity"/>
    <property type="evidence" value="ECO:0007669"/>
    <property type="project" value="TreeGrafter"/>
</dbReference>
<dbReference type="GO" id="GO:0046872">
    <property type="term" value="F:metal ion binding"/>
    <property type="evidence" value="ECO:0007669"/>
    <property type="project" value="UniProtKB-KW"/>
</dbReference>
<dbReference type="GO" id="GO:0103039">
    <property type="term" value="F:protein methylthiotransferase activity"/>
    <property type="evidence" value="ECO:0007669"/>
    <property type="project" value="UniProtKB-EC"/>
</dbReference>
<dbReference type="GO" id="GO:0006400">
    <property type="term" value="P:tRNA modification"/>
    <property type="evidence" value="ECO:0007669"/>
    <property type="project" value="InterPro"/>
</dbReference>
<dbReference type="CDD" id="cd01335">
    <property type="entry name" value="Radical_SAM"/>
    <property type="match status" value="1"/>
</dbReference>
<dbReference type="FunFam" id="3.40.50.12160:FF:000002">
    <property type="entry name" value="Ribosomal protein S12 methylthiotransferase RimO"/>
    <property type="match status" value="1"/>
</dbReference>
<dbReference type="FunFam" id="3.80.30.20:FF:000001">
    <property type="entry name" value="tRNA-2-methylthio-N(6)-dimethylallyladenosine synthase 2"/>
    <property type="match status" value="1"/>
</dbReference>
<dbReference type="Gene3D" id="3.40.50.12160">
    <property type="entry name" value="Methylthiotransferase, N-terminal domain"/>
    <property type="match status" value="1"/>
</dbReference>
<dbReference type="Gene3D" id="2.40.50.140">
    <property type="entry name" value="Nucleic acid-binding proteins"/>
    <property type="match status" value="1"/>
</dbReference>
<dbReference type="Gene3D" id="3.80.30.20">
    <property type="entry name" value="tm_1862 like domain"/>
    <property type="match status" value="1"/>
</dbReference>
<dbReference type="HAMAP" id="MF_01865">
    <property type="entry name" value="MTTase_RimO"/>
    <property type="match status" value="1"/>
</dbReference>
<dbReference type="InterPro" id="IPR006638">
    <property type="entry name" value="Elp3/MiaA/NifB-like_rSAM"/>
</dbReference>
<dbReference type="InterPro" id="IPR005839">
    <property type="entry name" value="Methylthiotransferase"/>
</dbReference>
<dbReference type="InterPro" id="IPR020612">
    <property type="entry name" value="Methylthiotransferase_CS"/>
</dbReference>
<dbReference type="InterPro" id="IPR013848">
    <property type="entry name" value="Methylthiotransferase_N"/>
</dbReference>
<dbReference type="InterPro" id="IPR038135">
    <property type="entry name" value="Methylthiotransferase_N_sf"/>
</dbReference>
<dbReference type="InterPro" id="IPR012340">
    <property type="entry name" value="NA-bd_OB-fold"/>
</dbReference>
<dbReference type="InterPro" id="IPR005840">
    <property type="entry name" value="Ribosomal_uS12_MeSTrfase_RimO"/>
</dbReference>
<dbReference type="InterPro" id="IPR007197">
    <property type="entry name" value="rSAM"/>
</dbReference>
<dbReference type="InterPro" id="IPR023404">
    <property type="entry name" value="rSAM_horseshoe"/>
</dbReference>
<dbReference type="InterPro" id="IPR002792">
    <property type="entry name" value="TRAM_dom"/>
</dbReference>
<dbReference type="NCBIfam" id="TIGR01125">
    <property type="entry name" value="30S ribosomal protein S12 methylthiotransferase RimO"/>
    <property type="match status" value="1"/>
</dbReference>
<dbReference type="NCBIfam" id="TIGR00089">
    <property type="entry name" value="MiaB/RimO family radical SAM methylthiotransferase"/>
    <property type="match status" value="1"/>
</dbReference>
<dbReference type="PANTHER" id="PTHR43837">
    <property type="entry name" value="RIBOSOMAL PROTEIN S12 METHYLTHIOTRANSFERASE RIMO"/>
    <property type="match status" value="1"/>
</dbReference>
<dbReference type="PANTHER" id="PTHR43837:SF1">
    <property type="entry name" value="RIBOSOMAL PROTEIN US12 METHYLTHIOTRANSFERASE RIMO"/>
    <property type="match status" value="1"/>
</dbReference>
<dbReference type="Pfam" id="PF04055">
    <property type="entry name" value="Radical_SAM"/>
    <property type="match status" value="1"/>
</dbReference>
<dbReference type="Pfam" id="PF18693">
    <property type="entry name" value="TRAM_2"/>
    <property type="match status" value="1"/>
</dbReference>
<dbReference type="Pfam" id="PF00919">
    <property type="entry name" value="UPF0004"/>
    <property type="match status" value="1"/>
</dbReference>
<dbReference type="SFLD" id="SFLDG01082">
    <property type="entry name" value="B12-binding_domain_containing"/>
    <property type="match status" value="1"/>
</dbReference>
<dbReference type="SFLD" id="SFLDG01061">
    <property type="entry name" value="methylthiotransferase"/>
    <property type="match status" value="1"/>
</dbReference>
<dbReference type="SFLD" id="SFLDF00274">
    <property type="entry name" value="ribosomal_protein_S12_methylth"/>
    <property type="match status" value="1"/>
</dbReference>
<dbReference type="SMART" id="SM00729">
    <property type="entry name" value="Elp3"/>
    <property type="match status" value="1"/>
</dbReference>
<dbReference type="SUPFAM" id="SSF102114">
    <property type="entry name" value="Radical SAM enzymes"/>
    <property type="match status" value="1"/>
</dbReference>
<dbReference type="PROSITE" id="PS51449">
    <property type="entry name" value="MTTASE_N"/>
    <property type="match status" value="1"/>
</dbReference>
<dbReference type="PROSITE" id="PS01278">
    <property type="entry name" value="MTTASE_RADICAL"/>
    <property type="match status" value="1"/>
</dbReference>
<dbReference type="PROSITE" id="PS51918">
    <property type="entry name" value="RADICAL_SAM"/>
    <property type="match status" value="1"/>
</dbReference>
<dbReference type="PROSITE" id="PS50926">
    <property type="entry name" value="TRAM"/>
    <property type="match status" value="1"/>
</dbReference>
<evidence type="ECO:0000255" key="1">
    <source>
        <dbReference type="HAMAP-Rule" id="MF_01865"/>
    </source>
</evidence>
<evidence type="ECO:0000255" key="2">
    <source>
        <dbReference type="PROSITE-ProRule" id="PRU01266"/>
    </source>
</evidence>
<proteinExistence type="inferred from homology"/>
<reference key="1">
    <citation type="journal article" date="2001" name="Proc. Natl. Acad. Sci. U.S.A.">
        <title>Complete genomic sequence of Pasteurella multocida Pm70.</title>
        <authorList>
            <person name="May B.J."/>
            <person name="Zhang Q."/>
            <person name="Li L.L."/>
            <person name="Paustian M.L."/>
            <person name="Whittam T.S."/>
            <person name="Kapur V."/>
        </authorList>
    </citation>
    <scope>NUCLEOTIDE SEQUENCE [LARGE SCALE GENOMIC DNA]</scope>
    <source>
        <strain>Pm70</strain>
    </source>
</reference>